<comment type="function">
    <text evidence="1">Mitochondrial membrane ATP synthase (F(1)F(0) ATP synthase or Complex V) produces ATP from ADP in the presence of a proton gradient across the membrane which is generated by electron transport complexes of the respiratory chain. F-type ATPases consist of two structural domains, F(1) - containing the extramembraneous catalytic core, and F(0) - containing the membrane proton channel, linked together by a central stalk and a peripheral stalk. During catalysis, ATP synthesis in the catalytic domain of F(1) is coupled via a rotary mechanism of the central stalk subunits to proton translocation. Part of the complex F(0) domain and the peripheric stalk, which acts as a stator to hold the catalytic alpha(3)beta(3) subcomplex and subunit a/ATP6 static relative to the rotary elements (By similarity).</text>
</comment>
<comment type="subunit">
    <text>F-type ATPases have 2 components, CF(1) - the catalytic core - and CF(0) - the membrane proton channel. In yeast, the dimeric form of ATP synthase consists of 17 polypeptides: alpha, beta, gamma, delta, epsilon, 4 (B), 5 (OSCP), 6 (A), 8, 9 (C), d, E (Tim11), f, g, h, i/j and k.</text>
</comment>
<comment type="subcellular location">
    <subcellularLocation>
        <location evidence="1">Mitochondrion inner membrane</location>
        <topology evidence="1">Peripheral membrane protein</topology>
    </subcellularLocation>
</comment>
<comment type="similarity">
    <text evidence="3">Belongs to the ATPase d subunit family.</text>
</comment>
<comment type="sequence caution" evidence="3">
    <conflict type="erroneous gene model prediction">
        <sequence resource="EMBL-CDS" id="EAU32464"/>
    </conflict>
    <text>The predicted gene ATEG_07080 has been split into 2 genes: ATEG_07080.1 and ATEG_07080.2.</text>
</comment>
<keyword id="KW-0066">ATP synthesis</keyword>
<keyword id="KW-0138">CF(0)</keyword>
<keyword id="KW-0375">Hydrogen ion transport</keyword>
<keyword id="KW-0406">Ion transport</keyword>
<keyword id="KW-0472">Membrane</keyword>
<keyword id="KW-0496">Mitochondrion</keyword>
<keyword id="KW-0999">Mitochondrion inner membrane</keyword>
<keyword id="KW-1185">Reference proteome</keyword>
<keyword id="KW-0809">Transit peptide</keyword>
<keyword id="KW-0813">Transport</keyword>
<organism>
    <name type="scientific">Aspergillus terreus (strain NIH 2624 / FGSC A1156)</name>
    <dbReference type="NCBI Taxonomy" id="341663"/>
    <lineage>
        <taxon>Eukaryota</taxon>
        <taxon>Fungi</taxon>
        <taxon>Dikarya</taxon>
        <taxon>Ascomycota</taxon>
        <taxon>Pezizomycotina</taxon>
        <taxon>Eurotiomycetes</taxon>
        <taxon>Eurotiomycetidae</taxon>
        <taxon>Eurotiales</taxon>
        <taxon>Aspergillaceae</taxon>
        <taxon>Aspergillus</taxon>
        <taxon>Aspergillus subgen. Circumdati</taxon>
    </lineage>
</organism>
<accession>P0C2C8</accession>
<accession>Q0CGW2</accession>
<feature type="transit peptide" description="Mitochondrion" evidence="2">
    <location>
        <begin position="1"/>
        <end position="23"/>
    </location>
</feature>
<feature type="chain" id="PRO_0000273478" description="ATP synthase subunit d, mitochondrial">
    <location>
        <begin position="24"/>
        <end position="173"/>
    </location>
</feature>
<proteinExistence type="inferred from homology"/>
<evidence type="ECO:0000250" key="1"/>
<evidence type="ECO:0000255" key="2"/>
<evidence type="ECO:0000305" key="3"/>
<reference key="1">
    <citation type="submission" date="2005-09" db="EMBL/GenBank/DDBJ databases">
        <title>Annotation of the Aspergillus terreus NIH2624 genome.</title>
        <authorList>
            <person name="Birren B.W."/>
            <person name="Lander E.S."/>
            <person name="Galagan J.E."/>
            <person name="Nusbaum C."/>
            <person name="Devon K."/>
            <person name="Henn M."/>
            <person name="Ma L.-J."/>
            <person name="Jaffe D.B."/>
            <person name="Butler J."/>
            <person name="Alvarez P."/>
            <person name="Gnerre S."/>
            <person name="Grabherr M."/>
            <person name="Kleber M."/>
            <person name="Mauceli E.W."/>
            <person name="Brockman W."/>
            <person name="Rounsley S."/>
            <person name="Young S.K."/>
            <person name="LaButti K."/>
            <person name="Pushparaj V."/>
            <person name="DeCaprio D."/>
            <person name="Crawford M."/>
            <person name="Koehrsen M."/>
            <person name="Engels R."/>
            <person name="Montgomery P."/>
            <person name="Pearson M."/>
            <person name="Howarth C."/>
            <person name="Larson L."/>
            <person name="Luoma S."/>
            <person name="White J."/>
            <person name="Alvarado L."/>
            <person name="Kodira C.D."/>
            <person name="Zeng Q."/>
            <person name="Oleary S."/>
            <person name="Yandava C."/>
            <person name="Denning D.W."/>
            <person name="Nierman W.C."/>
            <person name="Milne T."/>
            <person name="Madden K."/>
        </authorList>
    </citation>
    <scope>NUCLEOTIDE SEQUENCE [LARGE SCALE GENOMIC DNA]</scope>
    <source>
        <strain>NIH 2624 / FGSC A1156</strain>
    </source>
</reference>
<sequence>MAARSAALKIDWVKVTSSLGLRGQTAASLQAFKKRNDDARRKVQILSEQPQTVDFAHYRQILKNQAVVDEIENQFKNFKPATYDVSRQLKAIEAFEAQAVQNAEQTKGKVEAELRNLQKTLENIETARPFDELTVDEVAAAQPEIDEKTASLVSKGRWMPAGYKERFGDMSVV</sequence>
<protein>
    <recommendedName>
        <fullName>ATP synthase subunit d, mitochondrial</fullName>
    </recommendedName>
</protein>
<name>ATP7_ASPTN</name>
<dbReference type="EMBL" id="CH476603">
    <property type="protein sequence ID" value="EAU32464.1"/>
    <property type="status" value="ALT_SEQ"/>
    <property type="molecule type" value="Genomic_DNA"/>
</dbReference>
<dbReference type="SMR" id="P0C2C8"/>
<dbReference type="STRING" id="341663.P0C2C8"/>
<dbReference type="EnsemblFungi" id="EAU32464">
    <property type="protein sequence ID" value="EAU32464"/>
    <property type="gene ID" value="ATEG_07080"/>
</dbReference>
<dbReference type="Proteomes" id="UP000007963">
    <property type="component" value="Unassembled WGS sequence"/>
</dbReference>
<dbReference type="GO" id="GO:0005743">
    <property type="term" value="C:mitochondrial inner membrane"/>
    <property type="evidence" value="ECO:0007669"/>
    <property type="project" value="UniProtKB-SubCell"/>
</dbReference>
<dbReference type="GO" id="GO:0045259">
    <property type="term" value="C:proton-transporting ATP synthase complex"/>
    <property type="evidence" value="ECO:0007669"/>
    <property type="project" value="UniProtKB-KW"/>
</dbReference>
<dbReference type="GO" id="GO:0015078">
    <property type="term" value="F:proton transmembrane transporter activity"/>
    <property type="evidence" value="ECO:0007669"/>
    <property type="project" value="InterPro"/>
</dbReference>
<dbReference type="GO" id="GO:0015986">
    <property type="term" value="P:proton motive force-driven ATP synthesis"/>
    <property type="evidence" value="ECO:0007669"/>
    <property type="project" value="InterPro"/>
</dbReference>
<dbReference type="Gene3D" id="6.10.280.70">
    <property type="match status" value="1"/>
</dbReference>
<dbReference type="InterPro" id="IPR008689">
    <property type="entry name" value="ATP_synth_F0_dsu_mt"/>
</dbReference>
<dbReference type="InterPro" id="IPR036228">
    <property type="entry name" value="ATP_synth_F0_dsu_sf_mt"/>
</dbReference>
<dbReference type="PANTHER" id="PTHR12700">
    <property type="entry name" value="ATP SYNTHASE SUBUNIT D, MITOCHONDRIAL"/>
    <property type="match status" value="1"/>
</dbReference>
<dbReference type="Pfam" id="PF05873">
    <property type="entry name" value="Mt_ATP-synt_D"/>
    <property type="match status" value="1"/>
</dbReference>
<dbReference type="PIRSF" id="PIRSF005514">
    <property type="entry name" value="ATPase_F0_D_mt"/>
    <property type="match status" value="1"/>
</dbReference>
<dbReference type="SUPFAM" id="SSF161065">
    <property type="entry name" value="ATP synthase D chain-like"/>
    <property type="match status" value="1"/>
</dbReference>
<gene>
    <name type="primary">atp7</name>
    <name type="ORF">ATEG_07080.2</name>
</gene>